<name>CAIT_ECO8A</name>
<reference key="1">
    <citation type="journal article" date="2009" name="PLoS Genet.">
        <title>Organised genome dynamics in the Escherichia coli species results in highly diverse adaptive paths.</title>
        <authorList>
            <person name="Touchon M."/>
            <person name="Hoede C."/>
            <person name="Tenaillon O."/>
            <person name="Barbe V."/>
            <person name="Baeriswyl S."/>
            <person name="Bidet P."/>
            <person name="Bingen E."/>
            <person name="Bonacorsi S."/>
            <person name="Bouchier C."/>
            <person name="Bouvet O."/>
            <person name="Calteau A."/>
            <person name="Chiapello H."/>
            <person name="Clermont O."/>
            <person name="Cruveiller S."/>
            <person name="Danchin A."/>
            <person name="Diard M."/>
            <person name="Dossat C."/>
            <person name="Karoui M.E."/>
            <person name="Frapy E."/>
            <person name="Garry L."/>
            <person name="Ghigo J.M."/>
            <person name="Gilles A.M."/>
            <person name="Johnson J."/>
            <person name="Le Bouguenec C."/>
            <person name="Lescat M."/>
            <person name="Mangenot S."/>
            <person name="Martinez-Jehanne V."/>
            <person name="Matic I."/>
            <person name="Nassif X."/>
            <person name="Oztas S."/>
            <person name="Petit M.A."/>
            <person name="Pichon C."/>
            <person name="Rouy Z."/>
            <person name="Ruf C.S."/>
            <person name="Schneider D."/>
            <person name="Tourret J."/>
            <person name="Vacherie B."/>
            <person name="Vallenet D."/>
            <person name="Medigue C."/>
            <person name="Rocha E.P.C."/>
            <person name="Denamur E."/>
        </authorList>
    </citation>
    <scope>NUCLEOTIDE SEQUENCE [LARGE SCALE GENOMIC DNA]</scope>
    <source>
        <strain>IAI1</strain>
    </source>
</reference>
<gene>
    <name evidence="1" type="primary">caiT</name>
    <name type="ordered locus">ECIAI1_0042</name>
</gene>
<proteinExistence type="inferred from homology"/>
<protein>
    <recommendedName>
        <fullName evidence="1">L-carnitine/gamma-butyrobetaine antiporter</fullName>
    </recommendedName>
</protein>
<comment type="function">
    <text evidence="1">Catalyzes the exchange of L-carnitine for gamma-butyrobetaine.</text>
</comment>
<comment type="catalytic activity">
    <reaction evidence="1">
        <text>4-(trimethylamino)butanoate(in) + (R)-carnitine(out) = 4-(trimethylamino)butanoate(out) + (R)-carnitine(in)</text>
        <dbReference type="Rhea" id="RHEA:29427"/>
        <dbReference type="ChEBI" id="CHEBI:16244"/>
        <dbReference type="ChEBI" id="CHEBI:16347"/>
    </reaction>
</comment>
<comment type="pathway">
    <text evidence="1">Amine and polyamine metabolism; carnitine metabolism.</text>
</comment>
<comment type="subunit">
    <text evidence="1">Homotrimer.</text>
</comment>
<comment type="subcellular location">
    <subcellularLocation>
        <location evidence="1">Cell inner membrane</location>
        <topology evidence="1">Multi-pass membrane protein</topology>
    </subcellularLocation>
</comment>
<comment type="similarity">
    <text evidence="1">Belongs to the BCCT transporter (TC 2.A.15) family. CaiT subfamily.</text>
</comment>
<sequence>MKNEKRKTGIEPKVFFPPLIIVGILCWLTVRDLDAANVVINAVFSYVTNVWGWAFEWYMVVMLFGWFWLVFGPYAKKRLGNEPPEFSTASWIFMMFASCTSAAVLFWGSIEIYYYISTPPFGLEPNSTGAKELGLAYSLFHWGPLPWATYSFLSVAFAYFFFVRKMEVIRPSSTLVPLVGEKHAKGLFGTIVDNFYLVALIFAMGTSLGLATPLVTECMQWLFGIPHTLQLDAIIITCWIILNAICVACGLQKGVRIASDVRSYLSFLMLGWVFIVSGASFIMNYFTDSVGMLLMYLPRMLFYTDPIAKGGFPQGWTVFYWAWWVIYAIQMSIFLARISRGRTVRELCFGMVLGLTASTWILWTVLGSNTLLLIDKNIINIPNLIEQYGVARAIIETWAALPLSTATIWGFFILCFIATVTLVNACSYTLAMSTCREVRDGEEPPLLVRIGWSILVGIIGIVLLALGGLKPIQTAIIAGGCPLFFVNIMVTLSFIKDAKQNWKD</sequence>
<feature type="chain" id="PRO_1000136231" description="L-carnitine/gamma-butyrobetaine antiporter">
    <location>
        <begin position="1"/>
        <end position="504"/>
    </location>
</feature>
<feature type="transmembrane region" description="Helical" evidence="1">
    <location>
        <begin position="10"/>
        <end position="30"/>
    </location>
</feature>
<feature type="transmembrane region" description="Helical" evidence="1">
    <location>
        <begin position="51"/>
        <end position="71"/>
    </location>
</feature>
<feature type="transmembrane region" description="Helical" evidence="1">
    <location>
        <begin position="92"/>
        <end position="112"/>
    </location>
</feature>
<feature type="transmembrane region" description="Helical" evidence="1">
    <location>
        <begin position="143"/>
        <end position="163"/>
    </location>
</feature>
<feature type="transmembrane region" description="Helical" evidence="1">
    <location>
        <begin position="195"/>
        <end position="215"/>
    </location>
</feature>
<feature type="transmembrane region" description="Helical" evidence="1">
    <location>
        <begin position="231"/>
        <end position="251"/>
    </location>
</feature>
<feature type="transmembrane region" description="Helical" evidence="1">
    <location>
        <begin position="263"/>
        <end position="283"/>
    </location>
</feature>
<feature type="transmembrane region" description="Helical" evidence="1">
    <location>
        <begin position="316"/>
        <end position="336"/>
    </location>
</feature>
<feature type="transmembrane region" description="Helical" evidence="1">
    <location>
        <begin position="347"/>
        <end position="367"/>
    </location>
</feature>
<feature type="transmembrane region" description="Helical" evidence="1">
    <location>
        <begin position="398"/>
        <end position="418"/>
    </location>
</feature>
<feature type="transmembrane region" description="Helical" evidence="1">
    <location>
        <begin position="446"/>
        <end position="466"/>
    </location>
</feature>
<feature type="transmembrane region" description="Helical" evidence="1">
    <location>
        <begin position="475"/>
        <end position="495"/>
    </location>
</feature>
<dbReference type="EMBL" id="CU928160">
    <property type="protein sequence ID" value="CAQ96932.1"/>
    <property type="molecule type" value="Genomic_DNA"/>
</dbReference>
<dbReference type="RefSeq" id="WP_000787100.1">
    <property type="nucleotide sequence ID" value="NC_011741.1"/>
</dbReference>
<dbReference type="SMR" id="B7M0D7"/>
<dbReference type="KEGG" id="ecr:ECIAI1_0042"/>
<dbReference type="HOGENOM" id="CLU_010118_6_0_6"/>
<dbReference type="UniPathway" id="UPA00117"/>
<dbReference type="GO" id="GO:0005886">
    <property type="term" value="C:plasma membrane"/>
    <property type="evidence" value="ECO:0007669"/>
    <property type="project" value="UniProtKB-SubCell"/>
</dbReference>
<dbReference type="GO" id="GO:0044667">
    <property type="term" value="F:(R)-carnitine:4-(trimethylammonio)butanoate antiporter activity"/>
    <property type="evidence" value="ECO:0007669"/>
    <property type="project" value="UniProtKB-UniRule"/>
</dbReference>
<dbReference type="GO" id="GO:1900751">
    <property type="term" value="P:4-(trimethylammonio)butanoate transport"/>
    <property type="evidence" value="ECO:0007669"/>
    <property type="project" value="InterPro"/>
</dbReference>
<dbReference type="GO" id="GO:0009437">
    <property type="term" value="P:carnitine metabolic process"/>
    <property type="evidence" value="ECO:0007669"/>
    <property type="project" value="UniProtKB-UniRule"/>
</dbReference>
<dbReference type="HAMAP" id="MF_01049">
    <property type="entry name" value="CaiT"/>
    <property type="match status" value="1"/>
</dbReference>
<dbReference type="InterPro" id="IPR018093">
    <property type="entry name" value="BCCT_CS"/>
</dbReference>
<dbReference type="InterPro" id="IPR000060">
    <property type="entry name" value="BCCT_transptr"/>
</dbReference>
<dbReference type="InterPro" id="IPR023449">
    <property type="entry name" value="BCCT_transptr_CaiT"/>
</dbReference>
<dbReference type="NCBIfam" id="TIGR00842">
    <property type="entry name" value="bcct"/>
    <property type="match status" value="1"/>
</dbReference>
<dbReference type="NCBIfam" id="NF002887">
    <property type="entry name" value="PRK03356.1"/>
    <property type="match status" value="1"/>
</dbReference>
<dbReference type="PANTHER" id="PTHR30047">
    <property type="entry name" value="HIGH-AFFINITY CHOLINE TRANSPORT PROTEIN-RELATED"/>
    <property type="match status" value="1"/>
</dbReference>
<dbReference type="PANTHER" id="PTHR30047:SF11">
    <property type="entry name" value="L-CARNITINE_GAMMA-BUTYROBETAINE ANTIPORTER"/>
    <property type="match status" value="1"/>
</dbReference>
<dbReference type="Pfam" id="PF02028">
    <property type="entry name" value="BCCT"/>
    <property type="match status" value="1"/>
</dbReference>
<dbReference type="PROSITE" id="PS01303">
    <property type="entry name" value="BCCT"/>
    <property type="match status" value="1"/>
</dbReference>
<evidence type="ECO:0000255" key="1">
    <source>
        <dbReference type="HAMAP-Rule" id="MF_01049"/>
    </source>
</evidence>
<organism>
    <name type="scientific">Escherichia coli O8 (strain IAI1)</name>
    <dbReference type="NCBI Taxonomy" id="585034"/>
    <lineage>
        <taxon>Bacteria</taxon>
        <taxon>Pseudomonadati</taxon>
        <taxon>Pseudomonadota</taxon>
        <taxon>Gammaproteobacteria</taxon>
        <taxon>Enterobacterales</taxon>
        <taxon>Enterobacteriaceae</taxon>
        <taxon>Escherichia</taxon>
    </lineage>
</organism>
<accession>B7M0D7</accession>
<keyword id="KW-0050">Antiport</keyword>
<keyword id="KW-0997">Cell inner membrane</keyword>
<keyword id="KW-1003">Cell membrane</keyword>
<keyword id="KW-0472">Membrane</keyword>
<keyword id="KW-0812">Transmembrane</keyword>
<keyword id="KW-1133">Transmembrane helix</keyword>
<keyword id="KW-0813">Transport</keyword>